<comment type="function">
    <text evidence="1">Hydrolyzes diadenosine 5',5'''-P1,P4-tetraphosphate to yield ADP.</text>
</comment>
<comment type="catalytic activity">
    <reaction evidence="1">
        <text>P(1),P(4)-bis(5'-adenosyl) tetraphosphate + H2O = 2 ADP + 2 H(+)</text>
        <dbReference type="Rhea" id="RHEA:24252"/>
        <dbReference type="ChEBI" id="CHEBI:15377"/>
        <dbReference type="ChEBI" id="CHEBI:15378"/>
        <dbReference type="ChEBI" id="CHEBI:58141"/>
        <dbReference type="ChEBI" id="CHEBI:456216"/>
        <dbReference type="EC" id="3.6.1.41"/>
    </reaction>
</comment>
<comment type="similarity">
    <text evidence="1">Belongs to the Ap4A hydrolase family.</text>
</comment>
<gene>
    <name evidence="1" type="primary">apaH</name>
    <name type="ordered locus">PBPRA0400</name>
</gene>
<reference key="1">
    <citation type="journal article" date="2005" name="Science">
        <title>Life at depth: Photobacterium profundum genome sequence and expression analysis.</title>
        <authorList>
            <person name="Vezzi A."/>
            <person name="Campanaro S."/>
            <person name="D'Angelo M."/>
            <person name="Simonato F."/>
            <person name="Vitulo N."/>
            <person name="Lauro F.M."/>
            <person name="Cestaro A."/>
            <person name="Malacrida G."/>
            <person name="Simionati B."/>
            <person name="Cannata N."/>
            <person name="Romualdi C."/>
            <person name="Bartlett D.H."/>
            <person name="Valle G."/>
        </authorList>
    </citation>
    <scope>NUCLEOTIDE SEQUENCE [LARGE SCALE GENOMIC DNA]</scope>
    <source>
        <strain>ATCC BAA-1253 / SS9</strain>
    </source>
</reference>
<sequence length="273" mass="30996">MATYLVGDIQGCLDDLLYLLEQAKFTPKQDELWLAGDLVARGPKSLETLRFVKGLDRSATIVLGNHDLHLLATANGITKPKKKDKIQAILDAPDSAELLEWLRKQPLFASHPTLPFAMSHAGIPPQWNLSQTQQYAREVEVCLQSDDYLWLLKNMYGSGPDFWSNELIGIERYRFTINALTRMRFCYPDGRLDMACKLSPNDPDVGELVPWFDLPRHQVLDKKIIFGHWAALCGHEDERVIGLDTGCVWGNSMTLLRWEDNARFEKACSVHAN</sequence>
<name>APAH_PHOPR</name>
<organism>
    <name type="scientific">Photobacterium profundum (strain SS9)</name>
    <dbReference type="NCBI Taxonomy" id="298386"/>
    <lineage>
        <taxon>Bacteria</taxon>
        <taxon>Pseudomonadati</taxon>
        <taxon>Pseudomonadota</taxon>
        <taxon>Gammaproteobacteria</taxon>
        <taxon>Vibrionales</taxon>
        <taxon>Vibrionaceae</taxon>
        <taxon>Photobacterium</taxon>
    </lineage>
</organism>
<evidence type="ECO:0000255" key="1">
    <source>
        <dbReference type="HAMAP-Rule" id="MF_00199"/>
    </source>
</evidence>
<accession>Q6LV43</accession>
<dbReference type="EC" id="3.6.1.41" evidence="1"/>
<dbReference type="EMBL" id="CR378664">
    <property type="protein sequence ID" value="CAG18832.1"/>
    <property type="molecule type" value="Genomic_DNA"/>
</dbReference>
<dbReference type="RefSeq" id="WP_011217189.1">
    <property type="nucleotide sequence ID" value="NC_006370.1"/>
</dbReference>
<dbReference type="SMR" id="Q6LV43"/>
<dbReference type="STRING" id="298386.PBPRA0400"/>
<dbReference type="KEGG" id="ppr:PBPRA0400"/>
<dbReference type="eggNOG" id="COG0639">
    <property type="taxonomic scope" value="Bacteria"/>
</dbReference>
<dbReference type="HOGENOM" id="CLU_056184_2_0_6"/>
<dbReference type="Proteomes" id="UP000000593">
    <property type="component" value="Chromosome 1"/>
</dbReference>
<dbReference type="GO" id="GO:0008803">
    <property type="term" value="F:bis(5'-nucleosyl)-tetraphosphatase (symmetrical) activity"/>
    <property type="evidence" value="ECO:0007669"/>
    <property type="project" value="UniProtKB-UniRule"/>
</dbReference>
<dbReference type="CDD" id="cd07422">
    <property type="entry name" value="MPP_ApaH"/>
    <property type="match status" value="1"/>
</dbReference>
<dbReference type="Gene3D" id="3.60.21.10">
    <property type="match status" value="1"/>
</dbReference>
<dbReference type="HAMAP" id="MF_00199">
    <property type="entry name" value="ApaH"/>
    <property type="match status" value="1"/>
</dbReference>
<dbReference type="InterPro" id="IPR004617">
    <property type="entry name" value="ApaH"/>
</dbReference>
<dbReference type="InterPro" id="IPR004843">
    <property type="entry name" value="Calcineurin-like_PHP_ApaH"/>
</dbReference>
<dbReference type="InterPro" id="IPR029052">
    <property type="entry name" value="Metallo-depent_PP-like"/>
</dbReference>
<dbReference type="NCBIfam" id="TIGR00668">
    <property type="entry name" value="apaH"/>
    <property type="match status" value="1"/>
</dbReference>
<dbReference type="NCBIfam" id="NF001204">
    <property type="entry name" value="PRK00166.1"/>
    <property type="match status" value="1"/>
</dbReference>
<dbReference type="PANTHER" id="PTHR40942">
    <property type="match status" value="1"/>
</dbReference>
<dbReference type="PANTHER" id="PTHR40942:SF4">
    <property type="entry name" value="CYTOCHROME C5"/>
    <property type="match status" value="1"/>
</dbReference>
<dbReference type="Pfam" id="PF00149">
    <property type="entry name" value="Metallophos"/>
    <property type="match status" value="1"/>
</dbReference>
<dbReference type="PIRSF" id="PIRSF000903">
    <property type="entry name" value="B5n-ttraPtase_sm"/>
    <property type="match status" value="1"/>
</dbReference>
<dbReference type="SUPFAM" id="SSF56300">
    <property type="entry name" value="Metallo-dependent phosphatases"/>
    <property type="match status" value="1"/>
</dbReference>
<proteinExistence type="inferred from homology"/>
<feature type="chain" id="PRO_0000198003" description="Bis(5'-nucleosyl)-tetraphosphatase, symmetrical">
    <location>
        <begin position="1"/>
        <end position="273"/>
    </location>
</feature>
<keyword id="KW-0378">Hydrolase</keyword>
<keyword id="KW-1185">Reference proteome</keyword>
<protein>
    <recommendedName>
        <fullName evidence="1">Bis(5'-nucleosyl)-tetraphosphatase, symmetrical</fullName>
        <ecNumber evidence="1">3.6.1.41</ecNumber>
    </recommendedName>
    <alternativeName>
        <fullName evidence="1">Ap4A hydrolase</fullName>
    </alternativeName>
    <alternativeName>
        <fullName evidence="1">Diadenosine 5',5'''-P1,P4-tetraphosphate pyrophosphohydrolase</fullName>
    </alternativeName>
    <alternativeName>
        <fullName evidence="1">Diadenosine tetraphosphatase</fullName>
    </alternativeName>
</protein>